<organism>
    <name type="scientific">Brucella abortus biovar 1 (strain 9-941)</name>
    <dbReference type="NCBI Taxonomy" id="262698"/>
    <lineage>
        <taxon>Bacteria</taxon>
        <taxon>Pseudomonadati</taxon>
        <taxon>Pseudomonadota</taxon>
        <taxon>Alphaproteobacteria</taxon>
        <taxon>Hyphomicrobiales</taxon>
        <taxon>Brucellaceae</taxon>
        <taxon>Brucella/Ochrobactrum group</taxon>
        <taxon>Brucella</taxon>
    </lineage>
</organism>
<accession>Q57FM9</accession>
<comment type="function">
    <text evidence="1">This protein is involved in the repair of mismatches in DNA. It is possible that it carries out the mismatch recognition step. This protein has a weak ATPase activity.</text>
</comment>
<comment type="similarity">
    <text evidence="1">Belongs to the DNA mismatch repair MutS family.</text>
</comment>
<reference key="1">
    <citation type="journal article" date="2005" name="J. Bacteriol.">
        <title>Completion of the genome sequence of Brucella abortus and comparison to the highly similar genomes of Brucella melitensis and Brucella suis.</title>
        <authorList>
            <person name="Halling S.M."/>
            <person name="Peterson-Burch B.D."/>
            <person name="Bricker B.J."/>
            <person name="Zuerner R.L."/>
            <person name="Qing Z."/>
            <person name="Li L.-L."/>
            <person name="Kapur V."/>
            <person name="Alt D.P."/>
            <person name="Olsen S.C."/>
        </authorList>
    </citation>
    <scope>NUCLEOTIDE SEQUENCE [LARGE SCALE GENOMIC DNA]</scope>
    <source>
        <strain>9-941</strain>
    </source>
</reference>
<sequence>MEAKVEEKEPEPVENAGPDAPVRLTPMMEQYIEIKAANVDSLLFYRMGDFYELFFDDAVAASAALGITLTKRGKHLGEDIPMCGVPVHAADDYLQKLIAKGYRVAVCEQVEDPAEAKKRGSKSVVKRDVIRLVTPGTLTEEKLLDPAQANFLMAMGRTRGDGALALVWIDISTGTFRVAETTPDRLFADIMRVDPRELVVADSAFHDEELRPVFDLIGKAVTPQPATLFDSAAAQTRIQHYFNVATLDGFGQFSRPELSAISGAIAYIEKTQISERPPLMRPEREHEGGTLFIDPATRASLELARTMSGNRDGSLLKAIDRTVTGGGARLLAERLTAPLTSPKEIALRLDSVSWCLSEQTLCEALRLELKGVPDMPRALSRLAVGRGGPRDLGALACGFEAAGGIASLLDGALLPDELAAAREAIEKMPAGFAAHLDRALADELPLLKRDGGFVREGYNSELDEMRALRDQSRRVIAGLQADYIEETGIKSLKIKHNNVLGYFIEVTANNSGAMTDTDEAKSRFIHRQTMANAMRFTTTELAELESKIANAADRALSIELAIFEELTAEAVAHADSIRAAASALSVFDVSTALAVLAEEQGYCRPHVDDSLSFNIVAGRHPVVEQALRRQAANPFVANDCDLSPQRDGGDGAIWLLTGPNMGGKSTFLRQNALIAILAQMGSFVPAGSAHIGVVDRLFSRVGASDDLARGRSTFMVEMVETAAILNQAGEHSLVILDEIGRGTATFDGLSIAWAAVEYLHEKNRCRALFATHFHEMTALSEKLERLSNVTMRVKEWDNDVIFLHEVAKGAADRSYGVQVARLAGLPEAVVNRARDVLHQLEAGETSGKADRLIDDLPLFSVMLQQEKPKPQIQAKDSELANAVAAISPDELTPREALDLIYKLKELAGKA</sequence>
<dbReference type="EMBL" id="AE017223">
    <property type="protein sequence ID" value="AAX73555.1"/>
    <property type="molecule type" value="Genomic_DNA"/>
</dbReference>
<dbReference type="RefSeq" id="WP_002965395.1">
    <property type="nucleotide sequence ID" value="NC_006932.1"/>
</dbReference>
<dbReference type="SMR" id="Q57FM9"/>
<dbReference type="EnsemblBacteria" id="AAX73555">
    <property type="protein sequence ID" value="AAX73555"/>
    <property type="gene ID" value="BruAb1_0143"/>
</dbReference>
<dbReference type="GeneID" id="93017383"/>
<dbReference type="KEGG" id="bmb:BruAb1_0143"/>
<dbReference type="HOGENOM" id="CLU_002472_3_1_5"/>
<dbReference type="Proteomes" id="UP000000540">
    <property type="component" value="Chromosome I"/>
</dbReference>
<dbReference type="GO" id="GO:0005829">
    <property type="term" value="C:cytosol"/>
    <property type="evidence" value="ECO:0007669"/>
    <property type="project" value="TreeGrafter"/>
</dbReference>
<dbReference type="GO" id="GO:0005524">
    <property type="term" value="F:ATP binding"/>
    <property type="evidence" value="ECO:0007669"/>
    <property type="project" value="UniProtKB-UniRule"/>
</dbReference>
<dbReference type="GO" id="GO:0140664">
    <property type="term" value="F:ATP-dependent DNA damage sensor activity"/>
    <property type="evidence" value="ECO:0007669"/>
    <property type="project" value="InterPro"/>
</dbReference>
<dbReference type="GO" id="GO:0003684">
    <property type="term" value="F:damaged DNA binding"/>
    <property type="evidence" value="ECO:0007669"/>
    <property type="project" value="UniProtKB-UniRule"/>
</dbReference>
<dbReference type="GO" id="GO:0030983">
    <property type="term" value="F:mismatched DNA binding"/>
    <property type="evidence" value="ECO:0007669"/>
    <property type="project" value="InterPro"/>
</dbReference>
<dbReference type="GO" id="GO:0006298">
    <property type="term" value="P:mismatch repair"/>
    <property type="evidence" value="ECO:0007669"/>
    <property type="project" value="UniProtKB-UniRule"/>
</dbReference>
<dbReference type="CDD" id="cd03284">
    <property type="entry name" value="ABC_MutS1"/>
    <property type="match status" value="1"/>
</dbReference>
<dbReference type="FunFam" id="3.40.1170.10:FF:000001">
    <property type="entry name" value="DNA mismatch repair protein MutS"/>
    <property type="match status" value="1"/>
</dbReference>
<dbReference type="FunFam" id="3.40.50.300:FF:000870">
    <property type="entry name" value="MutS protein homolog 4"/>
    <property type="match status" value="1"/>
</dbReference>
<dbReference type="Gene3D" id="1.10.1420.10">
    <property type="match status" value="2"/>
</dbReference>
<dbReference type="Gene3D" id="6.10.140.430">
    <property type="match status" value="1"/>
</dbReference>
<dbReference type="Gene3D" id="3.40.1170.10">
    <property type="entry name" value="DNA repair protein MutS, domain I"/>
    <property type="match status" value="1"/>
</dbReference>
<dbReference type="Gene3D" id="3.30.420.110">
    <property type="entry name" value="MutS, connector domain"/>
    <property type="match status" value="1"/>
</dbReference>
<dbReference type="Gene3D" id="3.40.50.300">
    <property type="entry name" value="P-loop containing nucleotide triphosphate hydrolases"/>
    <property type="match status" value="1"/>
</dbReference>
<dbReference type="HAMAP" id="MF_00096">
    <property type="entry name" value="MutS"/>
    <property type="match status" value="1"/>
</dbReference>
<dbReference type="InterPro" id="IPR005748">
    <property type="entry name" value="DNA_mismatch_repair_MutS"/>
</dbReference>
<dbReference type="InterPro" id="IPR007695">
    <property type="entry name" value="DNA_mismatch_repair_MutS-lik_N"/>
</dbReference>
<dbReference type="InterPro" id="IPR017261">
    <property type="entry name" value="DNA_mismatch_repair_MutS/MSH"/>
</dbReference>
<dbReference type="InterPro" id="IPR000432">
    <property type="entry name" value="DNA_mismatch_repair_MutS_C"/>
</dbReference>
<dbReference type="InterPro" id="IPR007861">
    <property type="entry name" value="DNA_mismatch_repair_MutS_clamp"/>
</dbReference>
<dbReference type="InterPro" id="IPR007696">
    <property type="entry name" value="DNA_mismatch_repair_MutS_core"/>
</dbReference>
<dbReference type="InterPro" id="IPR016151">
    <property type="entry name" value="DNA_mismatch_repair_MutS_N"/>
</dbReference>
<dbReference type="InterPro" id="IPR036187">
    <property type="entry name" value="DNA_mismatch_repair_MutS_sf"/>
</dbReference>
<dbReference type="InterPro" id="IPR007860">
    <property type="entry name" value="DNA_mmatch_repair_MutS_con_dom"/>
</dbReference>
<dbReference type="InterPro" id="IPR045076">
    <property type="entry name" value="MutS"/>
</dbReference>
<dbReference type="InterPro" id="IPR036678">
    <property type="entry name" value="MutS_con_dom_sf"/>
</dbReference>
<dbReference type="InterPro" id="IPR027417">
    <property type="entry name" value="P-loop_NTPase"/>
</dbReference>
<dbReference type="NCBIfam" id="TIGR01070">
    <property type="entry name" value="mutS1"/>
    <property type="match status" value="1"/>
</dbReference>
<dbReference type="NCBIfam" id="NF003810">
    <property type="entry name" value="PRK05399.1"/>
    <property type="match status" value="1"/>
</dbReference>
<dbReference type="PANTHER" id="PTHR11361:SF34">
    <property type="entry name" value="DNA MISMATCH REPAIR PROTEIN MSH1, MITOCHONDRIAL"/>
    <property type="match status" value="1"/>
</dbReference>
<dbReference type="PANTHER" id="PTHR11361">
    <property type="entry name" value="DNA MISMATCH REPAIR PROTEIN MUTS FAMILY MEMBER"/>
    <property type="match status" value="1"/>
</dbReference>
<dbReference type="Pfam" id="PF01624">
    <property type="entry name" value="MutS_I"/>
    <property type="match status" value="1"/>
</dbReference>
<dbReference type="Pfam" id="PF05188">
    <property type="entry name" value="MutS_II"/>
    <property type="match status" value="1"/>
</dbReference>
<dbReference type="Pfam" id="PF05192">
    <property type="entry name" value="MutS_III"/>
    <property type="match status" value="1"/>
</dbReference>
<dbReference type="Pfam" id="PF05190">
    <property type="entry name" value="MutS_IV"/>
    <property type="match status" value="1"/>
</dbReference>
<dbReference type="Pfam" id="PF00488">
    <property type="entry name" value="MutS_V"/>
    <property type="match status" value="1"/>
</dbReference>
<dbReference type="PIRSF" id="PIRSF037677">
    <property type="entry name" value="DNA_mis_repair_Msh6"/>
    <property type="match status" value="1"/>
</dbReference>
<dbReference type="SMART" id="SM00534">
    <property type="entry name" value="MUTSac"/>
    <property type="match status" value="1"/>
</dbReference>
<dbReference type="SMART" id="SM00533">
    <property type="entry name" value="MUTSd"/>
    <property type="match status" value="1"/>
</dbReference>
<dbReference type="SUPFAM" id="SSF55271">
    <property type="entry name" value="DNA repair protein MutS, domain I"/>
    <property type="match status" value="1"/>
</dbReference>
<dbReference type="SUPFAM" id="SSF53150">
    <property type="entry name" value="DNA repair protein MutS, domain II"/>
    <property type="match status" value="1"/>
</dbReference>
<dbReference type="SUPFAM" id="SSF48334">
    <property type="entry name" value="DNA repair protein MutS, domain III"/>
    <property type="match status" value="1"/>
</dbReference>
<dbReference type="SUPFAM" id="SSF52540">
    <property type="entry name" value="P-loop containing nucleoside triphosphate hydrolases"/>
    <property type="match status" value="1"/>
</dbReference>
<dbReference type="PROSITE" id="PS00486">
    <property type="entry name" value="DNA_MISMATCH_REPAIR_2"/>
    <property type="match status" value="1"/>
</dbReference>
<proteinExistence type="inferred from homology"/>
<feature type="chain" id="PRO_0000224354" description="DNA mismatch repair protein MutS">
    <location>
        <begin position="1"/>
        <end position="910"/>
    </location>
</feature>
<feature type="region of interest" description="Disordered" evidence="2">
    <location>
        <begin position="1"/>
        <end position="21"/>
    </location>
</feature>
<feature type="compositionally biased region" description="Basic and acidic residues" evidence="2">
    <location>
        <begin position="1"/>
        <end position="11"/>
    </location>
</feature>
<feature type="binding site" evidence="1">
    <location>
        <begin position="658"/>
        <end position="665"/>
    </location>
    <ligand>
        <name>ATP</name>
        <dbReference type="ChEBI" id="CHEBI:30616"/>
    </ligand>
</feature>
<name>MUTS_BRUAB</name>
<gene>
    <name evidence="1" type="primary">mutS</name>
    <name type="ordered locus">BruAb1_0143</name>
</gene>
<protein>
    <recommendedName>
        <fullName evidence="1">DNA mismatch repair protein MutS</fullName>
    </recommendedName>
</protein>
<evidence type="ECO:0000255" key="1">
    <source>
        <dbReference type="HAMAP-Rule" id="MF_00096"/>
    </source>
</evidence>
<evidence type="ECO:0000256" key="2">
    <source>
        <dbReference type="SAM" id="MobiDB-lite"/>
    </source>
</evidence>
<keyword id="KW-0067">ATP-binding</keyword>
<keyword id="KW-0227">DNA damage</keyword>
<keyword id="KW-0234">DNA repair</keyword>
<keyword id="KW-0238">DNA-binding</keyword>
<keyword id="KW-0547">Nucleotide-binding</keyword>